<keyword id="KW-0963">Cytoplasm</keyword>
<keyword id="KW-0238">DNA-binding</keyword>
<keyword id="KW-0804">Transcription</keyword>
<keyword id="KW-0805">Transcription regulation</keyword>
<dbReference type="EMBL" id="CP000790">
    <property type="protein sequence ID" value="ABU74910.1"/>
    <property type="molecule type" value="Genomic_DNA"/>
</dbReference>
<dbReference type="RefSeq" id="WP_005428886.1">
    <property type="nucleotide sequence ID" value="NC_022270.1"/>
</dbReference>
<dbReference type="SMR" id="A7N819"/>
<dbReference type="KEGG" id="vha:VIBHAR_07036"/>
<dbReference type="PATRIC" id="fig|338187.25.peg.5522"/>
<dbReference type="Proteomes" id="UP000008152">
    <property type="component" value="Chromosome II"/>
</dbReference>
<dbReference type="GO" id="GO:0005829">
    <property type="term" value="C:cytosol"/>
    <property type="evidence" value="ECO:0007669"/>
    <property type="project" value="TreeGrafter"/>
</dbReference>
<dbReference type="GO" id="GO:0003677">
    <property type="term" value="F:DNA binding"/>
    <property type="evidence" value="ECO:0007669"/>
    <property type="project" value="UniProtKB-UniRule"/>
</dbReference>
<dbReference type="GO" id="GO:0006355">
    <property type="term" value="P:regulation of DNA-templated transcription"/>
    <property type="evidence" value="ECO:0007669"/>
    <property type="project" value="UniProtKB-UniRule"/>
</dbReference>
<dbReference type="FunFam" id="1.10.10.200:FF:000003">
    <property type="entry name" value="Probable transcriptional regulatory protein YeeN"/>
    <property type="match status" value="1"/>
</dbReference>
<dbReference type="Gene3D" id="1.10.10.200">
    <property type="match status" value="1"/>
</dbReference>
<dbReference type="Gene3D" id="3.30.70.980">
    <property type="match status" value="2"/>
</dbReference>
<dbReference type="HAMAP" id="MF_00693">
    <property type="entry name" value="Transcrip_reg_TACO1"/>
    <property type="match status" value="1"/>
</dbReference>
<dbReference type="InterPro" id="IPR017856">
    <property type="entry name" value="Integrase-like_N"/>
</dbReference>
<dbReference type="InterPro" id="IPR048300">
    <property type="entry name" value="TACO1_YebC-like_2nd/3rd_dom"/>
</dbReference>
<dbReference type="InterPro" id="IPR049083">
    <property type="entry name" value="TACO1_YebC_N"/>
</dbReference>
<dbReference type="InterPro" id="IPR002876">
    <property type="entry name" value="Transcrip_reg_TACO1-like"/>
</dbReference>
<dbReference type="InterPro" id="IPR026564">
    <property type="entry name" value="Transcrip_reg_TACO1-like_dom3"/>
</dbReference>
<dbReference type="InterPro" id="IPR029072">
    <property type="entry name" value="YebC-like"/>
</dbReference>
<dbReference type="NCBIfam" id="NF009044">
    <property type="entry name" value="PRK12378.1"/>
    <property type="match status" value="1"/>
</dbReference>
<dbReference type="PANTHER" id="PTHR12532">
    <property type="entry name" value="TRANSLATIONAL ACTIVATOR OF CYTOCHROME C OXIDASE 1"/>
    <property type="match status" value="1"/>
</dbReference>
<dbReference type="PANTHER" id="PTHR12532:SF0">
    <property type="entry name" value="TRANSLATIONAL ACTIVATOR OF CYTOCHROME C OXIDASE 1"/>
    <property type="match status" value="1"/>
</dbReference>
<dbReference type="Pfam" id="PF20772">
    <property type="entry name" value="TACO1_YebC_N"/>
    <property type="match status" value="1"/>
</dbReference>
<dbReference type="Pfam" id="PF01709">
    <property type="entry name" value="Transcrip_reg"/>
    <property type="match status" value="1"/>
</dbReference>
<dbReference type="SUPFAM" id="SSF75625">
    <property type="entry name" value="YebC-like"/>
    <property type="match status" value="1"/>
</dbReference>
<organism>
    <name type="scientific">Vibrio campbellii (strain ATCC BAA-1116)</name>
    <dbReference type="NCBI Taxonomy" id="2902295"/>
    <lineage>
        <taxon>Bacteria</taxon>
        <taxon>Pseudomonadati</taxon>
        <taxon>Pseudomonadota</taxon>
        <taxon>Gammaproteobacteria</taxon>
        <taxon>Vibrionales</taxon>
        <taxon>Vibrionaceae</taxon>
        <taxon>Vibrio</taxon>
    </lineage>
</organism>
<accession>A7N819</accession>
<name>Y7036_VIBC1</name>
<protein>
    <recommendedName>
        <fullName evidence="1">Probable transcriptional regulatory protein VIBHAR_07036</fullName>
    </recommendedName>
</protein>
<proteinExistence type="inferred from homology"/>
<evidence type="ECO:0000255" key="1">
    <source>
        <dbReference type="HAMAP-Rule" id="MF_00693"/>
    </source>
</evidence>
<reference key="1">
    <citation type="submission" date="2007-08" db="EMBL/GenBank/DDBJ databases">
        <authorList>
            <consortium name="The Vibrio harveyi Genome Sequencing Project"/>
            <person name="Bassler B."/>
            <person name="Clifton S.W."/>
            <person name="Fulton L."/>
            <person name="Delehaunty K."/>
            <person name="Fronick C."/>
            <person name="Harrison M."/>
            <person name="Markivic C."/>
            <person name="Fulton R."/>
            <person name="Tin-Wollam A.-M."/>
            <person name="Shah N."/>
            <person name="Pepin K."/>
            <person name="Nash W."/>
            <person name="Thiruvilangam P."/>
            <person name="Bhonagiri V."/>
            <person name="Waters C."/>
            <person name="Tu K.C."/>
            <person name="Irgon J."/>
            <person name="Wilson R.K."/>
        </authorList>
    </citation>
    <scope>NUCLEOTIDE SEQUENCE [LARGE SCALE GENOMIC DNA]</scope>
    <source>
        <strain>ATCC BAA-1116 / BB120</strain>
    </source>
</reference>
<sequence length="238" mass="26106">MGRSFEVRKASMAKTAGAKIKVYSKYGKEIYMCAKNGGGDPDMNLSLKHLIAKAKKDQVPAHVIDKAIDKANGGGGEDYTPARYEGFGPGGTSVIVDCLTDNGNRTFQDVRQCFVKVGAKIGVEGSVSHMFDHQAVFQFKGEDDEIILETLMMEDVDVTDVELEDGVITVFAPHTEFFKTKTALNGAFPDLTIDVEEITFVPQTHTPVAGEDAEKFQKFLDLLDDCDDVQQVYHNGEL</sequence>
<comment type="subcellular location">
    <subcellularLocation>
        <location evidence="1">Cytoplasm</location>
    </subcellularLocation>
</comment>
<comment type="similarity">
    <text evidence="1">Belongs to the TACO1 family.</text>
</comment>
<feature type="chain" id="PRO_1000045392" description="Probable transcriptional regulatory protein VIBHAR_07036">
    <location>
        <begin position="1"/>
        <end position="238"/>
    </location>
</feature>
<gene>
    <name type="ordered locus">VIBHAR_07036</name>
</gene>